<name>PAND_CAUVC</name>
<reference key="1">
    <citation type="journal article" date="2001" name="Proc. Natl. Acad. Sci. U.S.A.">
        <title>Complete genome sequence of Caulobacter crescentus.</title>
        <authorList>
            <person name="Nierman W.C."/>
            <person name="Feldblyum T.V."/>
            <person name="Laub M.T."/>
            <person name="Paulsen I.T."/>
            <person name="Nelson K.E."/>
            <person name="Eisen J.A."/>
            <person name="Heidelberg J.F."/>
            <person name="Alley M.R.K."/>
            <person name="Ohta N."/>
            <person name="Maddock J.R."/>
            <person name="Potocka I."/>
            <person name="Nelson W.C."/>
            <person name="Newton A."/>
            <person name="Stephens C."/>
            <person name="Phadke N.D."/>
            <person name="Ely B."/>
            <person name="DeBoy R.T."/>
            <person name="Dodson R.J."/>
            <person name="Durkin A.S."/>
            <person name="Gwinn M.L."/>
            <person name="Haft D.H."/>
            <person name="Kolonay J.F."/>
            <person name="Smit J."/>
            <person name="Craven M.B."/>
            <person name="Khouri H.M."/>
            <person name="Shetty J."/>
            <person name="Berry K.J."/>
            <person name="Utterback T.R."/>
            <person name="Tran K."/>
            <person name="Wolf A.M."/>
            <person name="Vamathevan J.J."/>
            <person name="Ermolaeva M.D."/>
            <person name="White O."/>
            <person name="Salzberg S.L."/>
            <person name="Venter J.C."/>
            <person name="Shapiro L."/>
            <person name="Fraser C.M."/>
        </authorList>
    </citation>
    <scope>NUCLEOTIDE SEQUENCE [LARGE SCALE GENOMIC DNA]</scope>
    <source>
        <strain>ATCC 19089 / CIP 103742 / CB 15</strain>
    </source>
</reference>
<evidence type="ECO:0000255" key="1">
    <source>
        <dbReference type="HAMAP-Rule" id="MF_00446"/>
    </source>
</evidence>
<accession>Q9A602</accession>
<sequence length="118" mass="12740">MLLTMLKAKLHRATVTQADLDYEGSIAIDRDLLDASGILPNEQVDVLNITNGARFTTYAIEAPRGSKVIGVNGAAARLVQKNDLVIVVTYCQMPAEEARNYAPTVVLLDEGNLIKKAA</sequence>
<dbReference type="EC" id="4.1.1.11" evidence="1"/>
<dbReference type="EMBL" id="AE005673">
    <property type="protein sequence ID" value="AAK24266.1"/>
    <property type="molecule type" value="Genomic_DNA"/>
</dbReference>
<dbReference type="PIR" id="F87533">
    <property type="entry name" value="F87533"/>
</dbReference>
<dbReference type="RefSeq" id="NP_421098.1">
    <property type="nucleotide sequence ID" value="NC_002696.2"/>
</dbReference>
<dbReference type="RefSeq" id="WP_010920154.1">
    <property type="nucleotide sequence ID" value="NC_002696.2"/>
</dbReference>
<dbReference type="SMR" id="Q9A602"/>
<dbReference type="STRING" id="190650.CC_2295"/>
<dbReference type="EnsemblBacteria" id="AAK24266">
    <property type="protein sequence ID" value="AAK24266"/>
    <property type="gene ID" value="CC_2295"/>
</dbReference>
<dbReference type="KEGG" id="ccr:CC_2295"/>
<dbReference type="PATRIC" id="fig|190650.5.peg.2314"/>
<dbReference type="eggNOG" id="COG0853">
    <property type="taxonomic scope" value="Bacteria"/>
</dbReference>
<dbReference type="HOGENOM" id="CLU_115305_2_1_5"/>
<dbReference type="BioCyc" id="CAULO:CC2295-MONOMER"/>
<dbReference type="UniPathway" id="UPA00028">
    <property type="reaction ID" value="UER00002"/>
</dbReference>
<dbReference type="Proteomes" id="UP000001816">
    <property type="component" value="Chromosome"/>
</dbReference>
<dbReference type="GO" id="GO:0005829">
    <property type="term" value="C:cytosol"/>
    <property type="evidence" value="ECO:0007669"/>
    <property type="project" value="TreeGrafter"/>
</dbReference>
<dbReference type="GO" id="GO:0004068">
    <property type="term" value="F:aspartate 1-decarboxylase activity"/>
    <property type="evidence" value="ECO:0007669"/>
    <property type="project" value="UniProtKB-UniRule"/>
</dbReference>
<dbReference type="GO" id="GO:0006523">
    <property type="term" value="P:alanine biosynthetic process"/>
    <property type="evidence" value="ECO:0007669"/>
    <property type="project" value="InterPro"/>
</dbReference>
<dbReference type="GO" id="GO:0015940">
    <property type="term" value="P:pantothenate biosynthetic process"/>
    <property type="evidence" value="ECO:0007669"/>
    <property type="project" value="UniProtKB-UniRule"/>
</dbReference>
<dbReference type="CDD" id="cd06919">
    <property type="entry name" value="Asp_decarbox"/>
    <property type="match status" value="1"/>
</dbReference>
<dbReference type="Gene3D" id="2.40.40.20">
    <property type="match status" value="1"/>
</dbReference>
<dbReference type="HAMAP" id="MF_00446">
    <property type="entry name" value="PanD"/>
    <property type="match status" value="1"/>
</dbReference>
<dbReference type="InterPro" id="IPR009010">
    <property type="entry name" value="Asp_de-COase-like_dom_sf"/>
</dbReference>
<dbReference type="InterPro" id="IPR003190">
    <property type="entry name" value="Asp_decarbox"/>
</dbReference>
<dbReference type="NCBIfam" id="TIGR00223">
    <property type="entry name" value="panD"/>
    <property type="match status" value="1"/>
</dbReference>
<dbReference type="PANTHER" id="PTHR21012">
    <property type="entry name" value="ASPARTATE 1-DECARBOXYLASE"/>
    <property type="match status" value="1"/>
</dbReference>
<dbReference type="PANTHER" id="PTHR21012:SF0">
    <property type="entry name" value="ASPARTATE 1-DECARBOXYLASE"/>
    <property type="match status" value="1"/>
</dbReference>
<dbReference type="Pfam" id="PF02261">
    <property type="entry name" value="Asp_decarbox"/>
    <property type="match status" value="1"/>
</dbReference>
<dbReference type="PIRSF" id="PIRSF006246">
    <property type="entry name" value="Asp_decarbox"/>
    <property type="match status" value="1"/>
</dbReference>
<dbReference type="SUPFAM" id="SSF50692">
    <property type="entry name" value="ADC-like"/>
    <property type="match status" value="1"/>
</dbReference>
<proteinExistence type="inferred from homology"/>
<comment type="function">
    <text evidence="1">Catalyzes the pyruvoyl-dependent decarboxylation of aspartate to produce beta-alanine.</text>
</comment>
<comment type="catalytic activity">
    <reaction evidence="1">
        <text>L-aspartate + H(+) = beta-alanine + CO2</text>
        <dbReference type="Rhea" id="RHEA:19497"/>
        <dbReference type="ChEBI" id="CHEBI:15378"/>
        <dbReference type="ChEBI" id="CHEBI:16526"/>
        <dbReference type="ChEBI" id="CHEBI:29991"/>
        <dbReference type="ChEBI" id="CHEBI:57966"/>
        <dbReference type="EC" id="4.1.1.11"/>
    </reaction>
</comment>
<comment type="cofactor">
    <cofactor evidence="1">
        <name>pyruvate</name>
        <dbReference type="ChEBI" id="CHEBI:15361"/>
    </cofactor>
    <text evidence="1">Binds 1 pyruvoyl group covalently per subunit.</text>
</comment>
<comment type="pathway">
    <text evidence="1">Cofactor biosynthesis; (R)-pantothenate biosynthesis; beta-alanine from L-aspartate: step 1/1.</text>
</comment>
<comment type="subunit">
    <text evidence="1">Heterooctamer of four alpha and four beta subunits.</text>
</comment>
<comment type="subcellular location">
    <subcellularLocation>
        <location evidence="1">Cytoplasm</location>
    </subcellularLocation>
</comment>
<comment type="PTM">
    <text evidence="1">Is synthesized initially as an inactive proenzyme, which is activated by self-cleavage at a specific serine bond to produce a beta-subunit with a hydroxyl group at its C-terminus and an alpha-subunit with a pyruvoyl group at its N-terminus.</text>
</comment>
<comment type="similarity">
    <text evidence="1">Belongs to the PanD family.</text>
</comment>
<gene>
    <name evidence="1" type="primary">panD</name>
    <name type="ordered locus">CC_2295</name>
</gene>
<feature type="chain" id="PRO_0000023057" description="Aspartate 1-decarboxylase beta chain" evidence="1">
    <location>
        <begin position="1"/>
        <end position="24"/>
    </location>
</feature>
<feature type="chain" id="PRO_0000023058" description="Aspartate 1-decarboxylase alpha chain" evidence="1">
    <location>
        <begin position="25"/>
        <end position="118"/>
    </location>
</feature>
<feature type="active site" description="Schiff-base intermediate with substrate; via pyruvic acid" evidence="1">
    <location>
        <position position="25"/>
    </location>
</feature>
<feature type="active site" description="Proton donor" evidence="1">
    <location>
        <position position="58"/>
    </location>
</feature>
<feature type="binding site" evidence="1">
    <location>
        <position position="57"/>
    </location>
    <ligand>
        <name>substrate</name>
    </ligand>
</feature>
<feature type="binding site" evidence="1">
    <location>
        <begin position="73"/>
        <end position="75"/>
    </location>
    <ligand>
        <name>substrate</name>
    </ligand>
</feature>
<feature type="modified residue" description="Pyruvic acid (Ser)" evidence="1">
    <location>
        <position position="25"/>
    </location>
</feature>
<keyword id="KW-0068">Autocatalytic cleavage</keyword>
<keyword id="KW-0963">Cytoplasm</keyword>
<keyword id="KW-0210">Decarboxylase</keyword>
<keyword id="KW-0456">Lyase</keyword>
<keyword id="KW-0566">Pantothenate biosynthesis</keyword>
<keyword id="KW-0670">Pyruvate</keyword>
<keyword id="KW-1185">Reference proteome</keyword>
<keyword id="KW-0704">Schiff base</keyword>
<keyword id="KW-0865">Zymogen</keyword>
<organism>
    <name type="scientific">Caulobacter vibrioides (strain ATCC 19089 / CIP 103742 / CB 15)</name>
    <name type="common">Caulobacter crescentus</name>
    <dbReference type="NCBI Taxonomy" id="190650"/>
    <lineage>
        <taxon>Bacteria</taxon>
        <taxon>Pseudomonadati</taxon>
        <taxon>Pseudomonadota</taxon>
        <taxon>Alphaproteobacteria</taxon>
        <taxon>Caulobacterales</taxon>
        <taxon>Caulobacteraceae</taxon>
        <taxon>Caulobacter</taxon>
    </lineage>
</organism>
<protein>
    <recommendedName>
        <fullName evidence="1">Aspartate 1-decarboxylase</fullName>
        <ecNumber evidence="1">4.1.1.11</ecNumber>
    </recommendedName>
    <alternativeName>
        <fullName evidence="1">Aspartate alpha-decarboxylase</fullName>
    </alternativeName>
    <component>
        <recommendedName>
            <fullName evidence="1">Aspartate 1-decarboxylase beta chain</fullName>
        </recommendedName>
    </component>
    <component>
        <recommendedName>
            <fullName evidence="1">Aspartate 1-decarboxylase alpha chain</fullName>
        </recommendedName>
    </component>
</protein>